<comment type="function">
    <text evidence="1">Forms oxaloacetate, a four-carbon dicarboxylic acid source for the tricarboxylic acid cycle.</text>
</comment>
<comment type="catalytic activity">
    <reaction evidence="1">
        <text>oxaloacetate + phosphate = phosphoenolpyruvate + hydrogencarbonate</text>
        <dbReference type="Rhea" id="RHEA:28370"/>
        <dbReference type="ChEBI" id="CHEBI:16452"/>
        <dbReference type="ChEBI" id="CHEBI:17544"/>
        <dbReference type="ChEBI" id="CHEBI:43474"/>
        <dbReference type="ChEBI" id="CHEBI:58702"/>
        <dbReference type="EC" id="4.1.1.31"/>
    </reaction>
</comment>
<comment type="cofactor">
    <cofactor evidence="1">
        <name>Mg(2+)</name>
        <dbReference type="ChEBI" id="CHEBI:18420"/>
    </cofactor>
</comment>
<comment type="similarity">
    <text evidence="1">Belongs to the PEPCase type 1 family.</text>
</comment>
<name>CAPP_SERP5</name>
<proteinExistence type="inferred from homology"/>
<accession>A8GL86</accession>
<gene>
    <name evidence="1" type="primary">ppc</name>
    <name type="ordered locus">Spro_4783</name>
</gene>
<sequence length="878" mass="98397">MNEQYSAMRSNVSMLGKLLGDTIKEALGEHILDRVETIRKLSKSSRAGNEAHRQELLSTLQNLSNDELLPVARAFSQFLNLTNVAEQYHSISPNGEAASNPEALAQLFTRLKDKKLSTKELQNAVSQLSIELVLTAHPTEITRRTLIHKLVEVNTCLSQLDHNDLADYERNKIMRRLRQLVAQSWHTDEIRKHRPSPIDEAKWGFAVVENSLWEGVPAFLREFNEQLENSIDYSLPAEAVPVRFTSWMGGDRDGNPNVTAEITRHVLLLSRWKACDLFTRDIQVLVSELSMTECTPELRARAGGDEVQEPYREIMKQLRSQLMSSQAYLEGRLKGERVLKPHDLLVNNEQLWEPLFACYQSLQACGMSIIANGQLLDTLRRVRCFGVPLVRIDVRQESTRHTEAIAELTRYLGLGDYESWSEADKQAFLIRELNSKRPLVPLKWEPSADTQEVLETCRVIAEAPQGSIAAYVISMARTPSDVLAVHLLLKEAGCPFALPVAPLFETLDDLNNADDVMTQLLNIDWYRGFIQGKQMVMIGYSDSAKDAGVMAASWAQYRAQDALIKTCEKAGVALTLFHGRGGSIGRGGAPAHAALLSQPPGSLKGGLRVTEQGEMIRFKFGLPEVTISSLALYTGAILEANLLPPPEPKKEWRALMDDLSDTSCKMYRGYVRENPEFVPYFRAATPELELGKLPLGSRPAKRKPNGGVESLRAIPWIFAWTQNRLMLPAWLGAGAGLQEAVKAGKQDQLEAMCRDWPFFSTRIAMLEMVFAKADLWLAEYYDQRLVDKSLWPLGQQLRDQLASDIKVVLTIANDAHLMEDLPWIAESIALRNVYTDPLNVLQAELLHRSRQQEQPDARVEQALMVTIAGVAAGMRNTG</sequence>
<organism>
    <name type="scientific">Serratia proteamaculans (strain 568)</name>
    <dbReference type="NCBI Taxonomy" id="399741"/>
    <lineage>
        <taxon>Bacteria</taxon>
        <taxon>Pseudomonadati</taxon>
        <taxon>Pseudomonadota</taxon>
        <taxon>Gammaproteobacteria</taxon>
        <taxon>Enterobacterales</taxon>
        <taxon>Yersiniaceae</taxon>
        <taxon>Serratia</taxon>
    </lineage>
</organism>
<feature type="chain" id="PRO_1000061233" description="Phosphoenolpyruvate carboxylase">
    <location>
        <begin position="1"/>
        <end position="878"/>
    </location>
</feature>
<feature type="active site" evidence="1">
    <location>
        <position position="137"/>
    </location>
</feature>
<feature type="active site" evidence="1">
    <location>
        <position position="545"/>
    </location>
</feature>
<keyword id="KW-0120">Carbon dioxide fixation</keyword>
<keyword id="KW-0456">Lyase</keyword>
<keyword id="KW-0460">Magnesium</keyword>
<reference key="1">
    <citation type="submission" date="2007-09" db="EMBL/GenBank/DDBJ databases">
        <title>Complete sequence of chromosome of Serratia proteamaculans 568.</title>
        <authorList>
            <consortium name="US DOE Joint Genome Institute"/>
            <person name="Copeland A."/>
            <person name="Lucas S."/>
            <person name="Lapidus A."/>
            <person name="Barry K."/>
            <person name="Glavina del Rio T."/>
            <person name="Dalin E."/>
            <person name="Tice H."/>
            <person name="Pitluck S."/>
            <person name="Chain P."/>
            <person name="Malfatti S."/>
            <person name="Shin M."/>
            <person name="Vergez L."/>
            <person name="Schmutz J."/>
            <person name="Larimer F."/>
            <person name="Land M."/>
            <person name="Hauser L."/>
            <person name="Kyrpides N."/>
            <person name="Kim E."/>
            <person name="Taghavi S."/>
            <person name="Newman L."/>
            <person name="Vangronsveld J."/>
            <person name="van der Lelie D."/>
            <person name="Richardson P."/>
        </authorList>
    </citation>
    <scope>NUCLEOTIDE SEQUENCE [LARGE SCALE GENOMIC DNA]</scope>
    <source>
        <strain>568</strain>
    </source>
</reference>
<evidence type="ECO:0000255" key="1">
    <source>
        <dbReference type="HAMAP-Rule" id="MF_00595"/>
    </source>
</evidence>
<dbReference type="EC" id="4.1.1.31" evidence="1"/>
<dbReference type="EMBL" id="CP000826">
    <property type="protein sequence ID" value="ABV43876.1"/>
    <property type="molecule type" value="Genomic_DNA"/>
</dbReference>
<dbReference type="SMR" id="A8GL86"/>
<dbReference type="STRING" id="399741.Spro_4783"/>
<dbReference type="KEGG" id="spe:Spro_4783"/>
<dbReference type="eggNOG" id="COG2352">
    <property type="taxonomic scope" value="Bacteria"/>
</dbReference>
<dbReference type="HOGENOM" id="CLU_006557_2_0_6"/>
<dbReference type="OrthoDB" id="9768133at2"/>
<dbReference type="GO" id="GO:0005829">
    <property type="term" value="C:cytosol"/>
    <property type="evidence" value="ECO:0007669"/>
    <property type="project" value="TreeGrafter"/>
</dbReference>
<dbReference type="GO" id="GO:0000287">
    <property type="term" value="F:magnesium ion binding"/>
    <property type="evidence" value="ECO:0007669"/>
    <property type="project" value="UniProtKB-UniRule"/>
</dbReference>
<dbReference type="GO" id="GO:0008964">
    <property type="term" value="F:phosphoenolpyruvate carboxylase activity"/>
    <property type="evidence" value="ECO:0007669"/>
    <property type="project" value="UniProtKB-UniRule"/>
</dbReference>
<dbReference type="GO" id="GO:0015977">
    <property type="term" value="P:carbon fixation"/>
    <property type="evidence" value="ECO:0007669"/>
    <property type="project" value="UniProtKB-UniRule"/>
</dbReference>
<dbReference type="GO" id="GO:0006107">
    <property type="term" value="P:oxaloacetate metabolic process"/>
    <property type="evidence" value="ECO:0007669"/>
    <property type="project" value="UniProtKB-UniRule"/>
</dbReference>
<dbReference type="GO" id="GO:0006099">
    <property type="term" value="P:tricarboxylic acid cycle"/>
    <property type="evidence" value="ECO:0007669"/>
    <property type="project" value="InterPro"/>
</dbReference>
<dbReference type="FunFam" id="1.20.1440.90:FF:000002">
    <property type="entry name" value="Phosphoenolpyruvate carboxylase"/>
    <property type="match status" value="1"/>
</dbReference>
<dbReference type="Gene3D" id="1.20.1440.90">
    <property type="entry name" value="Phosphoenolpyruvate/pyruvate domain"/>
    <property type="match status" value="1"/>
</dbReference>
<dbReference type="HAMAP" id="MF_00595">
    <property type="entry name" value="PEPcase_type1"/>
    <property type="match status" value="1"/>
</dbReference>
<dbReference type="InterPro" id="IPR021135">
    <property type="entry name" value="PEP_COase"/>
</dbReference>
<dbReference type="InterPro" id="IPR022805">
    <property type="entry name" value="PEP_COase_bac/pln-type"/>
</dbReference>
<dbReference type="InterPro" id="IPR018129">
    <property type="entry name" value="PEP_COase_Lys_AS"/>
</dbReference>
<dbReference type="InterPro" id="IPR033129">
    <property type="entry name" value="PEPCASE_His_AS"/>
</dbReference>
<dbReference type="InterPro" id="IPR015813">
    <property type="entry name" value="Pyrv/PenolPyrv_kinase-like_dom"/>
</dbReference>
<dbReference type="NCBIfam" id="NF000584">
    <property type="entry name" value="PRK00009.1"/>
    <property type="match status" value="1"/>
</dbReference>
<dbReference type="PANTHER" id="PTHR30523">
    <property type="entry name" value="PHOSPHOENOLPYRUVATE CARBOXYLASE"/>
    <property type="match status" value="1"/>
</dbReference>
<dbReference type="PANTHER" id="PTHR30523:SF6">
    <property type="entry name" value="PHOSPHOENOLPYRUVATE CARBOXYLASE"/>
    <property type="match status" value="1"/>
</dbReference>
<dbReference type="Pfam" id="PF00311">
    <property type="entry name" value="PEPcase"/>
    <property type="match status" value="1"/>
</dbReference>
<dbReference type="PRINTS" id="PR00150">
    <property type="entry name" value="PEPCARBXLASE"/>
</dbReference>
<dbReference type="SUPFAM" id="SSF51621">
    <property type="entry name" value="Phosphoenolpyruvate/pyruvate domain"/>
    <property type="match status" value="1"/>
</dbReference>
<dbReference type="PROSITE" id="PS00781">
    <property type="entry name" value="PEPCASE_1"/>
    <property type="match status" value="1"/>
</dbReference>
<dbReference type="PROSITE" id="PS00393">
    <property type="entry name" value="PEPCASE_2"/>
    <property type="match status" value="1"/>
</dbReference>
<protein>
    <recommendedName>
        <fullName evidence="1">Phosphoenolpyruvate carboxylase</fullName>
        <shortName evidence="1">PEPC</shortName>
        <shortName evidence="1">PEPCase</shortName>
        <ecNumber evidence="1">4.1.1.31</ecNumber>
    </recommendedName>
</protein>